<feature type="chain" id="PRO_1000137312" description="H(+)/Cl(-) exchange transporter ClcA">
    <location>
        <begin position="1"/>
        <end position="478"/>
    </location>
</feature>
<feature type="topological domain" description="Cytoplasmic" evidence="1">
    <location>
        <begin position="1"/>
        <end position="32"/>
    </location>
</feature>
<feature type="transmembrane region" description="Helical" evidence="1">
    <location>
        <begin position="33"/>
        <end position="69"/>
    </location>
</feature>
<feature type="topological domain" description="Periplasmic" evidence="1">
    <location>
        <begin position="70"/>
        <end position="76"/>
    </location>
</feature>
<feature type="transmembrane region" description="Helical" evidence="1">
    <location>
        <begin position="77"/>
        <end position="100"/>
    </location>
</feature>
<feature type="intramembrane region" description="Helical" evidence="1">
    <location>
        <begin position="109"/>
        <end position="116"/>
    </location>
</feature>
<feature type="topological domain" description="Cytoplasmic" evidence="1">
    <location>
        <begin position="117"/>
        <end position="123"/>
    </location>
</feature>
<feature type="transmembrane region" description="Helical" evidence="1">
    <location>
        <begin position="124"/>
        <end position="141"/>
    </location>
</feature>
<feature type="transmembrane region" description="Helical" evidence="1">
    <location>
        <begin position="148"/>
        <end position="166"/>
    </location>
</feature>
<feature type="topological domain" description="Cytoplasmic" evidence="1">
    <location>
        <begin position="167"/>
        <end position="176"/>
    </location>
</feature>
<feature type="intramembrane region" description="Helical" evidence="1">
    <location>
        <begin position="177"/>
        <end position="189"/>
    </location>
</feature>
<feature type="intramembrane region" description="Helical" evidence="1">
    <location>
        <begin position="193"/>
        <end position="201"/>
    </location>
</feature>
<feature type="topological domain" description="Cytoplasmic" evidence="1">
    <location>
        <begin position="202"/>
        <end position="214"/>
    </location>
</feature>
<feature type="transmembrane region" description="Helical" evidence="1">
    <location>
        <begin position="215"/>
        <end position="232"/>
    </location>
</feature>
<feature type="topological domain" description="Periplasmic" evidence="1">
    <location>
        <begin position="233"/>
        <end position="252"/>
    </location>
</feature>
<feature type="transmembrane region" description="Helical" evidence="1">
    <location>
        <begin position="253"/>
        <end position="281"/>
    </location>
</feature>
<feature type="topological domain" description="Cytoplasmic" evidence="1">
    <location>
        <begin position="282"/>
        <end position="287"/>
    </location>
</feature>
<feature type="transmembrane region" description="Helical" evidence="1">
    <location>
        <begin position="288"/>
        <end position="309"/>
    </location>
</feature>
<feature type="topological domain" description="Periplasmic" evidence="1">
    <location>
        <begin position="310"/>
        <end position="329"/>
    </location>
</feature>
<feature type="transmembrane region" description="Helical" evidence="1">
    <location>
        <begin position="330"/>
        <end position="349"/>
    </location>
</feature>
<feature type="transmembrane region" description="Helical" evidence="1">
    <location>
        <begin position="355"/>
        <end position="376"/>
    </location>
</feature>
<feature type="topological domain" description="Periplasmic" evidence="1">
    <location>
        <begin position="377"/>
        <end position="386"/>
    </location>
</feature>
<feature type="intramembrane region" description="Helical" evidence="1">
    <location>
        <begin position="387"/>
        <end position="401"/>
    </location>
</feature>
<feature type="intramembrane region" description="Note=Loop between two helices" evidence="1">
    <location>
        <begin position="402"/>
        <end position="404"/>
    </location>
</feature>
<feature type="intramembrane region" description="Helical" evidence="1">
    <location>
        <begin position="405"/>
        <end position="416"/>
    </location>
</feature>
<feature type="intramembrane region" description="Note=Loop between two helices" evidence="1">
    <location>
        <begin position="417"/>
        <end position="421"/>
    </location>
</feature>
<feature type="transmembrane region" description="Helical" evidence="1">
    <location>
        <begin position="422"/>
        <end position="438"/>
    </location>
</feature>
<feature type="topological domain" description="Cytoplasmic" evidence="1">
    <location>
        <begin position="439"/>
        <end position="478"/>
    </location>
</feature>
<feature type="short sequence motif" description="Selectivity filter part_1" evidence="1">
    <location>
        <begin position="106"/>
        <end position="110"/>
    </location>
</feature>
<feature type="short sequence motif" description="Selectivity filter part_2" evidence="1">
    <location>
        <begin position="146"/>
        <end position="150"/>
    </location>
</feature>
<feature type="short sequence motif" description="Selectivity filter part_3" evidence="1">
    <location>
        <begin position="355"/>
        <end position="359"/>
    </location>
</feature>
<feature type="binding site" evidence="1">
    <location>
        <position position="107"/>
    </location>
    <ligand>
        <name>chloride</name>
        <dbReference type="ChEBI" id="CHEBI:17996"/>
    </ligand>
</feature>
<feature type="binding site" evidence="1">
    <location>
        <position position="356"/>
    </location>
    <ligand>
        <name>chloride</name>
        <dbReference type="ChEBI" id="CHEBI:17996"/>
    </ligand>
</feature>
<feature type="binding site" evidence="1">
    <location>
        <position position="357"/>
    </location>
    <ligand>
        <name>chloride</name>
        <dbReference type="ChEBI" id="CHEBI:17996"/>
    </ligand>
</feature>
<feature type="binding site" evidence="1">
    <location>
        <position position="445"/>
    </location>
    <ligand>
        <name>chloride</name>
        <dbReference type="ChEBI" id="CHEBI:17996"/>
    </ligand>
</feature>
<feature type="site" description="Mediates proton transfer from the outer aqueous phase to the interior of the protein; involved in linking H(+) and Cl(-) transport" evidence="1">
    <location>
        <position position="148"/>
    </location>
</feature>
<feature type="site" description="Mediates proton transfer from the protein to the inner aqueous phase" evidence="1">
    <location>
        <position position="203"/>
    </location>
</feature>
<name>CLCA_YERPB</name>
<dbReference type="EMBL" id="CP001048">
    <property type="protein sequence ID" value="ACC87760.1"/>
    <property type="molecule type" value="Genomic_DNA"/>
</dbReference>
<dbReference type="RefSeq" id="WP_011191762.1">
    <property type="nucleotide sequence ID" value="NZ_CP009780.1"/>
</dbReference>
<dbReference type="SMR" id="B2K549"/>
<dbReference type="KEGG" id="ypb:YPTS_0776"/>
<dbReference type="PATRIC" id="fig|502801.10.peg.107"/>
<dbReference type="GO" id="GO:0005886">
    <property type="term" value="C:plasma membrane"/>
    <property type="evidence" value="ECO:0007669"/>
    <property type="project" value="UniProtKB-SubCell"/>
</dbReference>
<dbReference type="GO" id="GO:0015297">
    <property type="term" value="F:antiporter activity"/>
    <property type="evidence" value="ECO:0007669"/>
    <property type="project" value="UniProtKB-UniRule"/>
</dbReference>
<dbReference type="GO" id="GO:0005247">
    <property type="term" value="F:voltage-gated chloride channel activity"/>
    <property type="evidence" value="ECO:0007669"/>
    <property type="project" value="TreeGrafter"/>
</dbReference>
<dbReference type="CDD" id="cd01031">
    <property type="entry name" value="EriC"/>
    <property type="match status" value="1"/>
</dbReference>
<dbReference type="FunFam" id="1.10.3080.10:FF:000005">
    <property type="entry name" value="H(+)/Cl(-) exchange transporter ClcA"/>
    <property type="match status" value="1"/>
</dbReference>
<dbReference type="Gene3D" id="1.10.3080.10">
    <property type="entry name" value="Clc chloride channel"/>
    <property type="match status" value="1"/>
</dbReference>
<dbReference type="HAMAP" id="MF_01128">
    <property type="entry name" value="CLC_ClcA"/>
    <property type="match status" value="1"/>
</dbReference>
<dbReference type="InterPro" id="IPR023861">
    <property type="entry name" value="Cl-channel_ClcA"/>
</dbReference>
<dbReference type="InterPro" id="IPR014743">
    <property type="entry name" value="Cl-channel_core"/>
</dbReference>
<dbReference type="InterPro" id="IPR001807">
    <property type="entry name" value="ClC"/>
</dbReference>
<dbReference type="NCBIfam" id="NF003640">
    <property type="entry name" value="PRK05277.1"/>
    <property type="match status" value="1"/>
</dbReference>
<dbReference type="PANTHER" id="PTHR45711">
    <property type="entry name" value="CHLORIDE CHANNEL PROTEIN"/>
    <property type="match status" value="1"/>
</dbReference>
<dbReference type="PANTHER" id="PTHR45711:SF6">
    <property type="entry name" value="CHLORIDE CHANNEL PROTEIN"/>
    <property type="match status" value="1"/>
</dbReference>
<dbReference type="Pfam" id="PF00654">
    <property type="entry name" value="Voltage_CLC"/>
    <property type="match status" value="1"/>
</dbReference>
<dbReference type="PRINTS" id="PR00762">
    <property type="entry name" value="CLCHANNEL"/>
</dbReference>
<dbReference type="SUPFAM" id="SSF81340">
    <property type="entry name" value="Clc chloride channel"/>
    <property type="match status" value="1"/>
</dbReference>
<comment type="function">
    <text evidence="1">Proton-coupled chloride transporter. Functions as antiport system and exchanges two chloride ions for 1 proton. Probably acts as an electrical shunt for an outwardly-directed proton pump that is linked to amino acid decarboxylation, as part of the extreme acid resistance (XAR) response.</text>
</comment>
<comment type="catalytic activity">
    <reaction evidence="1">
        <text>2 chloride(in) + H(+)(out) = 2 chloride(out) + H(+)(in)</text>
        <dbReference type="Rhea" id="RHEA:29567"/>
        <dbReference type="ChEBI" id="CHEBI:15378"/>
        <dbReference type="ChEBI" id="CHEBI:17996"/>
    </reaction>
</comment>
<comment type="subunit">
    <text evidence="1">Homodimer.</text>
</comment>
<comment type="subcellular location">
    <subcellularLocation>
        <location evidence="1">Cell inner membrane</location>
        <topology evidence="1">Multi-pass membrane protein</topology>
    </subcellularLocation>
</comment>
<comment type="similarity">
    <text evidence="1">Belongs to the chloride channel (TC 2.A.49) family. ClcA subfamily.</text>
</comment>
<organism>
    <name type="scientific">Yersinia pseudotuberculosis serotype IB (strain PB1/+)</name>
    <dbReference type="NCBI Taxonomy" id="502801"/>
    <lineage>
        <taxon>Bacteria</taxon>
        <taxon>Pseudomonadati</taxon>
        <taxon>Pseudomonadota</taxon>
        <taxon>Gammaproteobacteria</taxon>
        <taxon>Enterobacterales</taxon>
        <taxon>Yersiniaceae</taxon>
        <taxon>Yersinia</taxon>
    </lineage>
</organism>
<accession>B2K549</accession>
<reference key="1">
    <citation type="submission" date="2008-04" db="EMBL/GenBank/DDBJ databases">
        <title>Complete sequence of Yersinia pseudotuberculosis PB1/+.</title>
        <authorList>
            <person name="Copeland A."/>
            <person name="Lucas S."/>
            <person name="Lapidus A."/>
            <person name="Glavina del Rio T."/>
            <person name="Dalin E."/>
            <person name="Tice H."/>
            <person name="Bruce D."/>
            <person name="Goodwin L."/>
            <person name="Pitluck S."/>
            <person name="Munk A.C."/>
            <person name="Brettin T."/>
            <person name="Detter J.C."/>
            <person name="Han C."/>
            <person name="Tapia R."/>
            <person name="Schmutz J."/>
            <person name="Larimer F."/>
            <person name="Land M."/>
            <person name="Hauser L."/>
            <person name="Challacombe J.F."/>
            <person name="Green L."/>
            <person name="Lindler L.E."/>
            <person name="Nikolich M.P."/>
            <person name="Richardson P."/>
        </authorList>
    </citation>
    <scope>NUCLEOTIDE SEQUENCE [LARGE SCALE GENOMIC DNA]</scope>
    <source>
        <strain>PB1/+</strain>
    </source>
</reference>
<gene>
    <name evidence="1" type="primary">clcA</name>
    <name evidence="1" type="synonym">eriC</name>
    <name type="ordered locus">YPTS_0776</name>
</gene>
<keyword id="KW-0050">Antiport</keyword>
<keyword id="KW-0997">Cell inner membrane</keyword>
<keyword id="KW-1003">Cell membrane</keyword>
<keyword id="KW-0868">Chloride</keyword>
<keyword id="KW-0406">Ion transport</keyword>
<keyword id="KW-0472">Membrane</keyword>
<keyword id="KW-0812">Transmembrane</keyword>
<keyword id="KW-1133">Transmembrane helix</keyword>
<keyword id="KW-0813">Transport</keyword>
<evidence type="ECO:0000255" key="1">
    <source>
        <dbReference type="HAMAP-Rule" id="MF_01128"/>
    </source>
</evidence>
<proteinExistence type="inferred from homology"/>
<protein>
    <recommendedName>
        <fullName evidence="1">H(+)/Cl(-) exchange transporter ClcA</fullName>
    </recommendedName>
</protein>
<sequence>MTHSTQQLSPEGVAEGKRGRLIRELVNRDKTPLIILIMAAVVGVVTGLLGVAFDRGVDWVQQQRLLALANVADSALLVWPLAFIMSALLAMMGYFLVSRFAPEAGGSGIPEIEGAMEEMRPVRWWRVIPVKFIGGLGTLGAGMVLGREGPMVQMGGNSGRMIVDIFRLRSPEARHSLLATGAAAGLSAAFNAPLAGILFVIEEMRSQFRYSLVSIKAVFIGVITSTIVYRYFNGERAIIEVGKLSDAPLNTLWLYLLLGIIFGAVGVIFNALIFRTQDMFVRFHGGDWRKLVLIGGLLGGMCGLLALLHGNAVGGGFALIPIAAAGNFSIGMLLFIFIARVITTLLCFGSGAPGGIFAPMLALGTILGTAFGLSCAHFFPQYGIEAGTFAIAGMGALFAASVRAPLTGIVLVLEMTDNYQLILPMIVTCLGATLIAQFMGGKPLYSAILARTLAKQEQARATVIAQEPAVENTPQTGR</sequence>